<comment type="function">
    <text evidence="1">Promotes RNA polymerase assembly. Latches the N- and C-terminal regions of the beta' subunit thereby facilitating its interaction with the beta and alpha subunits.</text>
</comment>
<comment type="catalytic activity">
    <reaction evidence="1">
        <text>RNA(n) + a ribonucleoside 5'-triphosphate = RNA(n+1) + diphosphate</text>
        <dbReference type="Rhea" id="RHEA:21248"/>
        <dbReference type="Rhea" id="RHEA-COMP:14527"/>
        <dbReference type="Rhea" id="RHEA-COMP:17342"/>
        <dbReference type="ChEBI" id="CHEBI:33019"/>
        <dbReference type="ChEBI" id="CHEBI:61557"/>
        <dbReference type="ChEBI" id="CHEBI:140395"/>
        <dbReference type="EC" id="2.7.7.6"/>
    </reaction>
</comment>
<comment type="subunit">
    <text evidence="1">The RNAP catalytic core consists of 2 alpha, 1 beta, 1 beta' and 1 omega subunit. When a sigma factor is associated with the core the holoenzyme is formed, which can initiate transcription.</text>
</comment>
<comment type="similarity">
    <text evidence="1">Belongs to the RNA polymerase subunit omega family.</text>
</comment>
<evidence type="ECO:0000255" key="1">
    <source>
        <dbReference type="HAMAP-Rule" id="MF_00366"/>
    </source>
</evidence>
<accession>A6VEE4</accession>
<sequence>MARVTVEDCLDNVDNRFELVMLATKRARQLATGGKEPKVAWENDKPTVVALREIASGLVDENVVQQEDIVEDEPLFAAFDDEANTEAL</sequence>
<reference key="1">
    <citation type="submission" date="2007-06" db="EMBL/GenBank/DDBJ databases">
        <authorList>
            <person name="Dodson R.J."/>
            <person name="Harkins D."/>
            <person name="Paulsen I.T."/>
        </authorList>
    </citation>
    <scope>NUCLEOTIDE SEQUENCE [LARGE SCALE GENOMIC DNA]</scope>
    <source>
        <strain>DSM 24068 / PA7</strain>
    </source>
</reference>
<proteinExistence type="inferred from homology"/>
<keyword id="KW-0240">DNA-directed RNA polymerase</keyword>
<keyword id="KW-0548">Nucleotidyltransferase</keyword>
<keyword id="KW-0804">Transcription</keyword>
<keyword id="KW-0808">Transferase</keyword>
<organism>
    <name type="scientific">Pseudomonas paraeruginosa (strain DSM 24068 / PA7)</name>
    <name type="common">Pseudomonas aeruginosa (strain PA7)</name>
    <dbReference type="NCBI Taxonomy" id="381754"/>
    <lineage>
        <taxon>Bacteria</taxon>
        <taxon>Pseudomonadati</taxon>
        <taxon>Pseudomonadota</taxon>
        <taxon>Gammaproteobacteria</taxon>
        <taxon>Pseudomonadales</taxon>
        <taxon>Pseudomonadaceae</taxon>
        <taxon>Pseudomonas</taxon>
        <taxon>Pseudomonas paraeruginosa</taxon>
    </lineage>
</organism>
<protein>
    <recommendedName>
        <fullName evidence="1">DNA-directed RNA polymerase subunit omega</fullName>
        <shortName evidence="1">RNAP omega subunit</shortName>
        <ecNumber evidence="1">2.7.7.6</ecNumber>
    </recommendedName>
    <alternativeName>
        <fullName evidence="1">RNA polymerase omega subunit</fullName>
    </alternativeName>
    <alternativeName>
        <fullName evidence="1">Transcriptase subunit omega</fullName>
    </alternativeName>
</protein>
<dbReference type="EC" id="2.7.7.6" evidence="1"/>
<dbReference type="EMBL" id="CP000744">
    <property type="protein sequence ID" value="ABR81532.1"/>
    <property type="molecule type" value="Genomic_DNA"/>
</dbReference>
<dbReference type="RefSeq" id="WP_003096602.1">
    <property type="nucleotide sequence ID" value="NC_009656.1"/>
</dbReference>
<dbReference type="SMR" id="A6VEE4"/>
<dbReference type="GeneID" id="77223868"/>
<dbReference type="KEGG" id="pap:PSPA7_6113"/>
<dbReference type="HOGENOM" id="CLU_125406_5_3_6"/>
<dbReference type="Proteomes" id="UP000001582">
    <property type="component" value="Chromosome"/>
</dbReference>
<dbReference type="GO" id="GO:0000428">
    <property type="term" value="C:DNA-directed RNA polymerase complex"/>
    <property type="evidence" value="ECO:0007669"/>
    <property type="project" value="UniProtKB-KW"/>
</dbReference>
<dbReference type="GO" id="GO:0003677">
    <property type="term" value="F:DNA binding"/>
    <property type="evidence" value="ECO:0007669"/>
    <property type="project" value="UniProtKB-UniRule"/>
</dbReference>
<dbReference type="GO" id="GO:0003899">
    <property type="term" value="F:DNA-directed RNA polymerase activity"/>
    <property type="evidence" value="ECO:0007669"/>
    <property type="project" value="UniProtKB-UniRule"/>
</dbReference>
<dbReference type="GO" id="GO:0006351">
    <property type="term" value="P:DNA-templated transcription"/>
    <property type="evidence" value="ECO:0007669"/>
    <property type="project" value="UniProtKB-UniRule"/>
</dbReference>
<dbReference type="Gene3D" id="3.90.940.10">
    <property type="match status" value="1"/>
</dbReference>
<dbReference type="HAMAP" id="MF_00366">
    <property type="entry name" value="RNApol_bact_RpoZ"/>
    <property type="match status" value="1"/>
</dbReference>
<dbReference type="InterPro" id="IPR003716">
    <property type="entry name" value="DNA-dir_RNA_pol_omega"/>
</dbReference>
<dbReference type="InterPro" id="IPR006110">
    <property type="entry name" value="Pol_omega/Rpo6/RPB6"/>
</dbReference>
<dbReference type="InterPro" id="IPR036161">
    <property type="entry name" value="RPB6/omega-like_sf"/>
</dbReference>
<dbReference type="NCBIfam" id="TIGR00690">
    <property type="entry name" value="rpoZ"/>
    <property type="match status" value="1"/>
</dbReference>
<dbReference type="PANTHER" id="PTHR34476">
    <property type="entry name" value="DNA-DIRECTED RNA POLYMERASE SUBUNIT OMEGA"/>
    <property type="match status" value="1"/>
</dbReference>
<dbReference type="PANTHER" id="PTHR34476:SF1">
    <property type="entry name" value="DNA-DIRECTED RNA POLYMERASE SUBUNIT OMEGA"/>
    <property type="match status" value="1"/>
</dbReference>
<dbReference type="Pfam" id="PF01192">
    <property type="entry name" value="RNA_pol_Rpb6"/>
    <property type="match status" value="1"/>
</dbReference>
<dbReference type="SMART" id="SM01409">
    <property type="entry name" value="RNA_pol_Rpb6"/>
    <property type="match status" value="1"/>
</dbReference>
<dbReference type="SUPFAM" id="SSF63562">
    <property type="entry name" value="RPB6/omega subunit-like"/>
    <property type="match status" value="1"/>
</dbReference>
<gene>
    <name evidence="1" type="primary">rpoZ</name>
    <name type="ordered locus">PSPA7_6113</name>
</gene>
<feature type="chain" id="PRO_1000005978" description="DNA-directed RNA polymerase subunit omega">
    <location>
        <begin position="1"/>
        <end position="88"/>
    </location>
</feature>
<name>RPOZ_PSEP7</name>